<accession>P69291</accession>
<accession>Q07539</accession>
<accession>Q08029</accession>
<name>NCAP_I89A2</name>
<evidence type="ECO:0000255" key="1">
    <source>
        <dbReference type="HAMAP-Rule" id="MF_04070"/>
    </source>
</evidence>
<evidence type="ECO:0000256" key="2">
    <source>
        <dbReference type="SAM" id="MobiDB-lite"/>
    </source>
</evidence>
<comment type="function">
    <text evidence="1">Encapsidates the negative strand viral RNA, protecting it from nucleases. The encapsidated genomic RNA is termed the ribonucleoprotein (RNP) and serves as template for transcription and replication. The RNP needs to be localized in the host nucleus to start an infectious cycle, but is too large to diffuse through the nuclear pore complex. NP comprises at least 2 nuclear localization signals that are responsible for the active RNP import into the nucleus through cellular importin alpha/beta pathway. Later in the infection, nclear export of RNPs are mediated through viral proteins NEP interacting with M1 which binds nucleoproteins. It is possible that nucleoprotein binds directly host exportin-1/XPO1 and plays an active role in RNPs nuclear export. M1 interaction with RNP seems to hide nucleoprotein's nuclear localization signals. Soon after a virion infects a new cell, M1 dissociates from the RNP under acidification of the virion driven by M2 protein. Dissociation of M1 from RNP unmasks nucleoprotein's nuclear localization signals, targeting the RNP to the nucleus.</text>
</comment>
<comment type="subunit">
    <text evidence="1">Homomultimerizes to form the nucleocapsid. May bind host exportin-1/XPO1. Binds to viral genomic RNA. Protein-RNA contacts are mediated by a combination of electrostatic interactions between positively charged residues and the phosphate backbone and planar interactions between aromatic side chains and bases.</text>
</comment>
<comment type="subcellular location">
    <subcellularLocation>
        <location evidence="1">Virion</location>
    </subcellularLocation>
    <subcellularLocation>
        <location evidence="1">Host nucleus</location>
    </subcellularLocation>
</comment>
<comment type="PTM">
    <text evidence="1">Late in virus-infected cells, may be cleaved from a 56-kDa protein to a 53-kDa protein by a cellular caspase. This cleavage might be a marker for the onset of apoptosis in infected cells or have a specific function in virus host interaction.</text>
</comment>
<comment type="similarity">
    <text evidence="1">Belongs to the influenza viruses nucleoprotein family.</text>
</comment>
<feature type="chain" id="PRO_0000079025" description="Nucleoprotein">
    <location>
        <begin position="1"/>
        <end position="498"/>
    </location>
</feature>
<feature type="region of interest" description="Disordered" evidence="2">
    <location>
        <begin position="1"/>
        <end position="21"/>
    </location>
</feature>
<feature type="short sequence motif" description="Unconventional nuclear localization signal" evidence="1">
    <location>
        <begin position="1"/>
        <end position="18"/>
    </location>
</feature>
<feature type="short sequence motif" description="Bipartite nuclear localization signal" evidence="1">
    <location>
        <begin position="198"/>
        <end position="216"/>
    </location>
</feature>
<feature type="compositionally biased region" description="Basic and acidic residues" evidence="2">
    <location>
        <begin position="8"/>
        <end position="21"/>
    </location>
</feature>
<reference key="1">
    <citation type="journal article" date="1993" name="J. Virol.">
        <title>Analysis of the evolution and variation of the human influenza A virus nucleoprotein gene from 1933 to 1990.</title>
        <authorList>
            <person name="Shu L.L."/>
            <person name="Bean W.J."/>
            <person name="Webster R.G."/>
        </authorList>
    </citation>
    <scope>NUCLEOTIDE SEQUENCE [GENOMIC RNA]</scope>
</reference>
<organismHost>
    <name type="scientific">Aves</name>
    <dbReference type="NCBI Taxonomy" id="8782"/>
</organismHost>
<organismHost>
    <name type="scientific">Cetacea</name>
    <name type="common">whales</name>
    <dbReference type="NCBI Taxonomy" id="9721"/>
</organismHost>
<organismHost>
    <name type="scientific">Homo sapiens</name>
    <name type="common">Human</name>
    <dbReference type="NCBI Taxonomy" id="9606"/>
</organismHost>
<organismHost>
    <name type="scientific">Phocidae</name>
    <name type="common">true seals</name>
    <dbReference type="NCBI Taxonomy" id="9709"/>
</organismHost>
<organismHost>
    <name type="scientific">Sus scrofa</name>
    <name type="common">Pig</name>
    <dbReference type="NCBI Taxonomy" id="9823"/>
</organismHost>
<keyword id="KW-0167">Capsid protein</keyword>
<keyword id="KW-1139">Helical capsid protein</keyword>
<keyword id="KW-1048">Host nucleus</keyword>
<keyword id="KW-0945">Host-virus interaction</keyword>
<keyword id="KW-0687">Ribonucleoprotein</keyword>
<keyword id="KW-0694">RNA-binding</keyword>
<keyword id="KW-0543">Viral nucleoprotein</keyword>
<keyword id="KW-1163">Viral penetration into host nucleus</keyword>
<keyword id="KW-0946">Virion</keyword>
<keyword id="KW-1160">Virus entry into host cell</keyword>
<dbReference type="EMBL" id="L07354">
    <property type="protein sequence ID" value="AAA51484.1"/>
    <property type="molecule type" value="Genomic_RNA"/>
</dbReference>
<dbReference type="SMR" id="P69291"/>
<dbReference type="Proteomes" id="UP000166152">
    <property type="component" value="Genome"/>
</dbReference>
<dbReference type="GO" id="GO:0019029">
    <property type="term" value="C:helical viral capsid"/>
    <property type="evidence" value="ECO:0007669"/>
    <property type="project" value="UniProtKB-UniRule"/>
</dbReference>
<dbReference type="GO" id="GO:0043657">
    <property type="term" value="C:host cell"/>
    <property type="evidence" value="ECO:0007669"/>
    <property type="project" value="GOC"/>
</dbReference>
<dbReference type="GO" id="GO:0042025">
    <property type="term" value="C:host cell nucleus"/>
    <property type="evidence" value="ECO:0007669"/>
    <property type="project" value="UniProtKB-SubCell"/>
</dbReference>
<dbReference type="GO" id="GO:1990904">
    <property type="term" value="C:ribonucleoprotein complex"/>
    <property type="evidence" value="ECO:0007669"/>
    <property type="project" value="UniProtKB-KW"/>
</dbReference>
<dbReference type="GO" id="GO:0019013">
    <property type="term" value="C:viral nucleocapsid"/>
    <property type="evidence" value="ECO:0007669"/>
    <property type="project" value="UniProtKB-UniRule"/>
</dbReference>
<dbReference type="GO" id="GO:0003723">
    <property type="term" value="F:RNA binding"/>
    <property type="evidence" value="ECO:0007669"/>
    <property type="project" value="UniProtKB-UniRule"/>
</dbReference>
<dbReference type="GO" id="GO:0005198">
    <property type="term" value="F:structural molecule activity"/>
    <property type="evidence" value="ECO:0007669"/>
    <property type="project" value="UniProtKB-UniRule"/>
</dbReference>
<dbReference type="GO" id="GO:0046718">
    <property type="term" value="P:symbiont entry into host cell"/>
    <property type="evidence" value="ECO:0007669"/>
    <property type="project" value="UniProtKB-KW"/>
</dbReference>
<dbReference type="GO" id="GO:0075732">
    <property type="term" value="P:viral penetration into host nucleus"/>
    <property type="evidence" value="ECO:0007669"/>
    <property type="project" value="UniProtKB-UniRule"/>
</dbReference>
<dbReference type="HAMAP" id="MF_04070">
    <property type="entry name" value="INFV_NCAP"/>
    <property type="match status" value="1"/>
</dbReference>
<dbReference type="InterPro" id="IPR002141">
    <property type="entry name" value="Flu_NP"/>
</dbReference>
<dbReference type="Pfam" id="PF00506">
    <property type="entry name" value="Flu_NP"/>
    <property type="match status" value="1"/>
</dbReference>
<dbReference type="SUPFAM" id="SSF161003">
    <property type="entry name" value="flu NP-like"/>
    <property type="match status" value="1"/>
</dbReference>
<sequence length="498" mass="56225">MASQGTKRSYEQMETDGERQNATEIRASVGKMIDGIGRFYIQMCTELKLSDYEGRLIQNSLTVERMVLSAFDERRNRYLEEHPSAGKDPKKTGGPIYKRVGGRWMRELVLYDKEEIRRIWRQANNGDDATRGLTHMMIWHSNLNDTTYQRTRALVRTGMDPRMCSLMQGSTLPRRSGAAGAAVKGIGTMVMELIRMIKRGINDRNFWRGENGRKTRSAYERMCNILKGKFQTAAQRAMMDQVRESRNPGNAEIEDLIFSARSALILRGSVAHKSCLPACVYGPAVSSGYDFEKEGYSLVGIDPFKLLQNSQVYSLIRPNENPAHKSQLVWMACHSAAFEDLRLLSFIRGTKVSPRGKLSTRGVQIASNENMDNMESSTLELRSRYWAIRTRSGGNTNQQRASAGQISVQPTFSVQRNLPFEKSTVMAAFTGNTEGRTSDMRAEIIRMMEGAKPEEVSFRGRGVFELSDEKATNPIVPSFDMSNEGSYFFGDNAEEYDN</sequence>
<organism>
    <name type="scientific">Influenza A virus (strain A/Beijing/353/1989 H3N2)</name>
    <dbReference type="NCBI Taxonomy" id="380949"/>
    <lineage>
        <taxon>Viruses</taxon>
        <taxon>Riboviria</taxon>
        <taxon>Orthornavirae</taxon>
        <taxon>Negarnaviricota</taxon>
        <taxon>Polyploviricotina</taxon>
        <taxon>Insthoviricetes</taxon>
        <taxon>Articulavirales</taxon>
        <taxon>Orthomyxoviridae</taxon>
        <taxon>Alphainfluenzavirus</taxon>
        <taxon>Alphainfluenzavirus influenzae</taxon>
        <taxon>Influenza A virus</taxon>
    </lineage>
</organism>
<proteinExistence type="inferred from homology"/>
<gene>
    <name evidence="1" type="primary">NP</name>
</gene>
<protein>
    <recommendedName>
        <fullName evidence="1">Nucleoprotein</fullName>
    </recommendedName>
    <alternativeName>
        <fullName evidence="1">Nucleocapsid protein</fullName>
        <shortName evidence="1">Protein N</shortName>
    </alternativeName>
</protein>